<sequence>MKALTTRQKEVFDLIRDHITQTGMPPTRAEIASRLGFRSPNAAEEHLKALARKGAIEIVSGASRGIRLMIEEESGLPLIGRVAAGEPLLATQHIESHYQVDPALFKPHADFLLRVSGMSMKDIGIMDGDLLAVHKTQDACNGQVVVARIDDDVTVKRLKRQGNIVELLPENSEFDPIVVDLRQQELTIEGLAVGVIRNGNWL</sequence>
<name>LEXA_SODGM</name>
<evidence type="ECO:0000255" key="1">
    <source>
        <dbReference type="HAMAP-Rule" id="MF_00015"/>
    </source>
</evidence>
<reference key="1">
    <citation type="journal article" date="2006" name="Genome Res.">
        <title>Massive genome erosion and functional adaptations provide insights into the symbiotic lifestyle of Sodalis glossinidius in the tsetse host.</title>
        <authorList>
            <person name="Toh H."/>
            <person name="Weiss B.L."/>
            <person name="Perkin S.A.H."/>
            <person name="Yamashita A."/>
            <person name="Oshima K."/>
            <person name="Hattori M."/>
            <person name="Aksoy S."/>
        </authorList>
    </citation>
    <scope>NUCLEOTIDE SEQUENCE [LARGE SCALE GENOMIC DNA]</scope>
    <source>
        <strain>morsitans</strain>
    </source>
</reference>
<protein>
    <recommendedName>
        <fullName evidence="1">LexA repressor</fullName>
        <ecNumber evidence="1">3.4.21.88</ecNumber>
    </recommendedName>
</protein>
<dbReference type="EC" id="3.4.21.88" evidence="1"/>
<dbReference type="EMBL" id="AP008232">
    <property type="protein sequence ID" value="BAE75416.1"/>
    <property type="molecule type" value="Genomic_DNA"/>
</dbReference>
<dbReference type="RefSeq" id="WP_011411953.1">
    <property type="nucleotide sequence ID" value="NC_007712.1"/>
</dbReference>
<dbReference type="SMR" id="Q2NR09"/>
<dbReference type="STRING" id="343509.SG2141"/>
<dbReference type="MEROPS" id="S24.001"/>
<dbReference type="KEGG" id="sgl:SG2141"/>
<dbReference type="eggNOG" id="COG1974">
    <property type="taxonomic scope" value="Bacteria"/>
</dbReference>
<dbReference type="HOGENOM" id="CLU_066192_45_3_6"/>
<dbReference type="OrthoDB" id="9802364at2"/>
<dbReference type="BioCyc" id="SGLO343509:SGP1_RS19755-MONOMER"/>
<dbReference type="Proteomes" id="UP000001932">
    <property type="component" value="Chromosome"/>
</dbReference>
<dbReference type="GO" id="GO:0003677">
    <property type="term" value="F:DNA binding"/>
    <property type="evidence" value="ECO:0007669"/>
    <property type="project" value="UniProtKB-UniRule"/>
</dbReference>
<dbReference type="GO" id="GO:0004252">
    <property type="term" value="F:serine-type endopeptidase activity"/>
    <property type="evidence" value="ECO:0007669"/>
    <property type="project" value="UniProtKB-UniRule"/>
</dbReference>
<dbReference type="GO" id="GO:0006281">
    <property type="term" value="P:DNA repair"/>
    <property type="evidence" value="ECO:0007669"/>
    <property type="project" value="UniProtKB-UniRule"/>
</dbReference>
<dbReference type="GO" id="GO:0006260">
    <property type="term" value="P:DNA replication"/>
    <property type="evidence" value="ECO:0007669"/>
    <property type="project" value="UniProtKB-UniRule"/>
</dbReference>
<dbReference type="GO" id="GO:0045892">
    <property type="term" value="P:negative regulation of DNA-templated transcription"/>
    <property type="evidence" value="ECO:0007669"/>
    <property type="project" value="UniProtKB-UniRule"/>
</dbReference>
<dbReference type="GO" id="GO:0006508">
    <property type="term" value="P:proteolysis"/>
    <property type="evidence" value="ECO:0007669"/>
    <property type="project" value="InterPro"/>
</dbReference>
<dbReference type="GO" id="GO:0009432">
    <property type="term" value="P:SOS response"/>
    <property type="evidence" value="ECO:0007669"/>
    <property type="project" value="UniProtKB-UniRule"/>
</dbReference>
<dbReference type="CDD" id="cd06529">
    <property type="entry name" value="S24_LexA-like"/>
    <property type="match status" value="1"/>
</dbReference>
<dbReference type="FunFam" id="1.10.10.10:FF:000009">
    <property type="entry name" value="LexA repressor"/>
    <property type="match status" value="1"/>
</dbReference>
<dbReference type="FunFam" id="2.10.109.10:FF:000001">
    <property type="entry name" value="LexA repressor"/>
    <property type="match status" value="1"/>
</dbReference>
<dbReference type="Gene3D" id="2.10.109.10">
    <property type="entry name" value="Umud Fragment, subunit A"/>
    <property type="match status" value="1"/>
</dbReference>
<dbReference type="Gene3D" id="1.10.10.10">
    <property type="entry name" value="Winged helix-like DNA-binding domain superfamily/Winged helix DNA-binding domain"/>
    <property type="match status" value="1"/>
</dbReference>
<dbReference type="HAMAP" id="MF_00015">
    <property type="entry name" value="LexA"/>
    <property type="match status" value="1"/>
</dbReference>
<dbReference type="InterPro" id="IPR006200">
    <property type="entry name" value="LexA"/>
</dbReference>
<dbReference type="InterPro" id="IPR039418">
    <property type="entry name" value="LexA-like"/>
</dbReference>
<dbReference type="InterPro" id="IPR036286">
    <property type="entry name" value="LexA/Signal_pep-like_sf"/>
</dbReference>
<dbReference type="InterPro" id="IPR006199">
    <property type="entry name" value="LexA_DNA-bd_dom"/>
</dbReference>
<dbReference type="InterPro" id="IPR050077">
    <property type="entry name" value="LexA_repressor"/>
</dbReference>
<dbReference type="InterPro" id="IPR006197">
    <property type="entry name" value="Peptidase_S24_LexA"/>
</dbReference>
<dbReference type="InterPro" id="IPR015927">
    <property type="entry name" value="Peptidase_S24_S26A/B/C"/>
</dbReference>
<dbReference type="InterPro" id="IPR036388">
    <property type="entry name" value="WH-like_DNA-bd_sf"/>
</dbReference>
<dbReference type="InterPro" id="IPR036390">
    <property type="entry name" value="WH_DNA-bd_sf"/>
</dbReference>
<dbReference type="NCBIfam" id="TIGR00498">
    <property type="entry name" value="lexA"/>
    <property type="match status" value="1"/>
</dbReference>
<dbReference type="PANTHER" id="PTHR33516">
    <property type="entry name" value="LEXA REPRESSOR"/>
    <property type="match status" value="1"/>
</dbReference>
<dbReference type="PANTHER" id="PTHR33516:SF2">
    <property type="entry name" value="LEXA REPRESSOR-RELATED"/>
    <property type="match status" value="1"/>
</dbReference>
<dbReference type="Pfam" id="PF01726">
    <property type="entry name" value="LexA_DNA_bind"/>
    <property type="match status" value="1"/>
</dbReference>
<dbReference type="Pfam" id="PF00717">
    <property type="entry name" value="Peptidase_S24"/>
    <property type="match status" value="1"/>
</dbReference>
<dbReference type="PRINTS" id="PR00726">
    <property type="entry name" value="LEXASERPTASE"/>
</dbReference>
<dbReference type="SUPFAM" id="SSF51306">
    <property type="entry name" value="LexA/Signal peptidase"/>
    <property type="match status" value="1"/>
</dbReference>
<dbReference type="SUPFAM" id="SSF46785">
    <property type="entry name" value="Winged helix' DNA-binding domain"/>
    <property type="match status" value="1"/>
</dbReference>
<comment type="function">
    <text evidence="1">Represses a number of genes involved in the response to DNA damage (SOS response), including recA and lexA. Binds to the 16 bp palindromic sequence 5'-CTGTATATATATACAG-3'. In the presence of single-stranded DNA, RecA interacts with LexA causing an autocatalytic cleavage which disrupts the DNA-binding part of LexA, leading to derepression of the SOS regulon and eventually DNA repair.</text>
</comment>
<comment type="catalytic activity">
    <reaction evidence="1">
        <text>Hydrolysis of Ala-|-Gly bond in repressor LexA.</text>
        <dbReference type="EC" id="3.4.21.88"/>
    </reaction>
</comment>
<comment type="subunit">
    <text evidence="1">Homodimer.</text>
</comment>
<comment type="similarity">
    <text evidence="1">Belongs to the peptidase S24 family.</text>
</comment>
<organism>
    <name type="scientific">Sodalis glossinidius (strain morsitans)</name>
    <dbReference type="NCBI Taxonomy" id="343509"/>
    <lineage>
        <taxon>Bacteria</taxon>
        <taxon>Pseudomonadati</taxon>
        <taxon>Pseudomonadota</taxon>
        <taxon>Gammaproteobacteria</taxon>
        <taxon>Enterobacterales</taxon>
        <taxon>Bruguierivoracaceae</taxon>
        <taxon>Sodalis</taxon>
    </lineage>
</organism>
<accession>Q2NR09</accession>
<gene>
    <name evidence="1" type="primary">lexA</name>
    <name type="ordered locus">SG2141</name>
</gene>
<feature type="chain" id="PRO_1000001349" description="LexA repressor">
    <location>
        <begin position="1"/>
        <end position="202"/>
    </location>
</feature>
<feature type="DNA-binding region" description="H-T-H motif" evidence="1">
    <location>
        <begin position="28"/>
        <end position="48"/>
    </location>
</feature>
<feature type="active site" description="For autocatalytic cleavage activity" evidence="1">
    <location>
        <position position="119"/>
    </location>
</feature>
<feature type="active site" description="For autocatalytic cleavage activity" evidence="1">
    <location>
        <position position="156"/>
    </location>
</feature>
<feature type="site" description="Cleavage; by autolysis" evidence="1">
    <location>
        <begin position="84"/>
        <end position="85"/>
    </location>
</feature>
<proteinExistence type="inferred from homology"/>
<keyword id="KW-0068">Autocatalytic cleavage</keyword>
<keyword id="KW-0227">DNA damage</keyword>
<keyword id="KW-0234">DNA repair</keyword>
<keyword id="KW-0235">DNA replication</keyword>
<keyword id="KW-0238">DNA-binding</keyword>
<keyword id="KW-0378">Hydrolase</keyword>
<keyword id="KW-0678">Repressor</keyword>
<keyword id="KW-0742">SOS response</keyword>
<keyword id="KW-0804">Transcription</keyword>
<keyword id="KW-0805">Transcription regulation</keyword>